<evidence type="ECO:0000255" key="1">
    <source>
        <dbReference type="HAMAP-Rule" id="MF_00173"/>
    </source>
</evidence>
<dbReference type="EMBL" id="CP000962">
    <property type="protein sequence ID" value="ACA55363.1"/>
    <property type="molecule type" value="Genomic_DNA"/>
</dbReference>
<dbReference type="RefSeq" id="WP_012343354.1">
    <property type="nucleotide sequence ID" value="NC_010520.1"/>
</dbReference>
<dbReference type="SMR" id="B1KT46"/>
<dbReference type="KEGG" id="cbl:CLK_1268"/>
<dbReference type="HOGENOM" id="CLU_097103_3_0_9"/>
<dbReference type="UniPathway" id="UPA00068"/>
<dbReference type="GO" id="GO:0005737">
    <property type="term" value="C:cytoplasm"/>
    <property type="evidence" value="ECO:0007669"/>
    <property type="project" value="UniProtKB-SubCell"/>
</dbReference>
<dbReference type="GO" id="GO:0034618">
    <property type="term" value="F:arginine binding"/>
    <property type="evidence" value="ECO:0007669"/>
    <property type="project" value="InterPro"/>
</dbReference>
<dbReference type="GO" id="GO:0003677">
    <property type="term" value="F:DNA binding"/>
    <property type="evidence" value="ECO:0007669"/>
    <property type="project" value="UniProtKB-KW"/>
</dbReference>
<dbReference type="GO" id="GO:0003700">
    <property type="term" value="F:DNA-binding transcription factor activity"/>
    <property type="evidence" value="ECO:0007669"/>
    <property type="project" value="UniProtKB-UniRule"/>
</dbReference>
<dbReference type="GO" id="GO:0006526">
    <property type="term" value="P:L-arginine biosynthetic process"/>
    <property type="evidence" value="ECO:0007669"/>
    <property type="project" value="UniProtKB-UniPathway"/>
</dbReference>
<dbReference type="GO" id="GO:0051259">
    <property type="term" value="P:protein complex oligomerization"/>
    <property type="evidence" value="ECO:0007669"/>
    <property type="project" value="InterPro"/>
</dbReference>
<dbReference type="GO" id="GO:1900079">
    <property type="term" value="P:regulation of arginine biosynthetic process"/>
    <property type="evidence" value="ECO:0007669"/>
    <property type="project" value="UniProtKB-UniRule"/>
</dbReference>
<dbReference type="Gene3D" id="3.30.1360.40">
    <property type="match status" value="1"/>
</dbReference>
<dbReference type="Gene3D" id="1.10.10.10">
    <property type="entry name" value="Winged helix-like DNA-binding domain superfamily/Winged helix DNA-binding domain"/>
    <property type="match status" value="1"/>
</dbReference>
<dbReference type="HAMAP" id="MF_00173">
    <property type="entry name" value="Arg_repressor"/>
    <property type="match status" value="1"/>
</dbReference>
<dbReference type="InterPro" id="IPR001669">
    <property type="entry name" value="Arg_repress"/>
</dbReference>
<dbReference type="InterPro" id="IPR020899">
    <property type="entry name" value="Arg_repress_C"/>
</dbReference>
<dbReference type="InterPro" id="IPR036251">
    <property type="entry name" value="Arg_repress_C_sf"/>
</dbReference>
<dbReference type="InterPro" id="IPR020900">
    <property type="entry name" value="Arg_repress_DNA-bd"/>
</dbReference>
<dbReference type="InterPro" id="IPR036388">
    <property type="entry name" value="WH-like_DNA-bd_sf"/>
</dbReference>
<dbReference type="InterPro" id="IPR036390">
    <property type="entry name" value="WH_DNA-bd_sf"/>
</dbReference>
<dbReference type="NCBIfam" id="TIGR01529">
    <property type="entry name" value="argR_whole"/>
    <property type="match status" value="1"/>
</dbReference>
<dbReference type="NCBIfam" id="NF001680">
    <property type="entry name" value="PRK00441.1"/>
    <property type="match status" value="1"/>
</dbReference>
<dbReference type="PANTHER" id="PTHR34471">
    <property type="entry name" value="ARGININE REPRESSOR"/>
    <property type="match status" value="1"/>
</dbReference>
<dbReference type="PANTHER" id="PTHR34471:SF1">
    <property type="entry name" value="ARGININE REPRESSOR"/>
    <property type="match status" value="1"/>
</dbReference>
<dbReference type="Pfam" id="PF01316">
    <property type="entry name" value="Arg_repressor"/>
    <property type="match status" value="1"/>
</dbReference>
<dbReference type="Pfam" id="PF02863">
    <property type="entry name" value="Arg_repressor_C"/>
    <property type="match status" value="1"/>
</dbReference>
<dbReference type="PRINTS" id="PR01467">
    <property type="entry name" value="ARGREPRESSOR"/>
</dbReference>
<dbReference type="SUPFAM" id="SSF55252">
    <property type="entry name" value="C-terminal domain of arginine repressor"/>
    <property type="match status" value="1"/>
</dbReference>
<dbReference type="SUPFAM" id="SSF46785">
    <property type="entry name" value="Winged helix' DNA-binding domain"/>
    <property type="match status" value="1"/>
</dbReference>
<proteinExistence type="inferred from homology"/>
<name>ARGR_CLOBM</name>
<reference key="1">
    <citation type="journal article" date="2007" name="PLoS ONE">
        <title>Analysis of the neurotoxin complex genes in Clostridium botulinum A1-A4 and B1 strains: BoNT/A3, /Ba4 and /B1 clusters are located within plasmids.</title>
        <authorList>
            <person name="Smith T.J."/>
            <person name="Hill K.K."/>
            <person name="Foley B.T."/>
            <person name="Detter J.C."/>
            <person name="Munk A.C."/>
            <person name="Bruce D.C."/>
            <person name="Doggett N.A."/>
            <person name="Smith L.A."/>
            <person name="Marks J.D."/>
            <person name="Xie G."/>
            <person name="Brettin T.S."/>
        </authorList>
    </citation>
    <scope>NUCLEOTIDE SEQUENCE [LARGE SCALE GENOMIC DNA]</scope>
    <source>
        <strain>Loch Maree / Type A3</strain>
    </source>
</reference>
<accession>B1KT46</accession>
<comment type="function">
    <text evidence="1">Regulates arginine biosynthesis genes.</text>
</comment>
<comment type="pathway">
    <text>Amino-acid biosynthesis; L-arginine biosynthesis [regulation].</text>
</comment>
<comment type="subcellular location">
    <subcellularLocation>
        <location evidence="1">Cytoplasm</location>
    </subcellularLocation>
</comment>
<comment type="similarity">
    <text evidence="1">Belongs to the ArgR family.</text>
</comment>
<organism>
    <name type="scientific">Clostridium botulinum (strain Loch Maree / Type A3)</name>
    <dbReference type="NCBI Taxonomy" id="498214"/>
    <lineage>
        <taxon>Bacteria</taxon>
        <taxon>Bacillati</taxon>
        <taxon>Bacillota</taxon>
        <taxon>Clostridia</taxon>
        <taxon>Eubacteriales</taxon>
        <taxon>Clostridiaceae</taxon>
        <taxon>Clostridium</taxon>
    </lineage>
</organism>
<keyword id="KW-0028">Amino-acid biosynthesis</keyword>
<keyword id="KW-0055">Arginine biosynthesis</keyword>
<keyword id="KW-0963">Cytoplasm</keyword>
<keyword id="KW-0238">DNA-binding</keyword>
<keyword id="KW-0678">Repressor</keyword>
<keyword id="KW-0804">Transcription</keyword>
<keyword id="KW-0805">Transcription regulation</keyword>
<protein>
    <recommendedName>
        <fullName evidence="1">Arginine repressor</fullName>
    </recommendedName>
</protein>
<gene>
    <name evidence="1" type="primary">argR</name>
    <name type="ordered locus">CLK_1268</name>
</gene>
<sequence length="150" mass="16467">MKVSRHAKILEIINSKDIDTQEELAEELKKMGMNVTQATVSRDIKELKLIKVLGNTGKYKYATINHTESYMSDKLINIFAQTVINVENIDKLIIIKAISGSAPAAAEAIDTLGFDGVAGTIAGDNTIFVMARTNEKAQEITMKLKKIINA</sequence>
<feature type="chain" id="PRO_1000097866" description="Arginine repressor">
    <location>
        <begin position="1"/>
        <end position="150"/>
    </location>
</feature>